<reference key="1">
    <citation type="journal article" date="2003" name="Nat. Genet.">
        <title>Comparative analysis of the genome sequences of Bordetella pertussis, Bordetella parapertussis and Bordetella bronchiseptica.</title>
        <authorList>
            <person name="Parkhill J."/>
            <person name="Sebaihia M."/>
            <person name="Preston A."/>
            <person name="Murphy L.D."/>
            <person name="Thomson N.R."/>
            <person name="Harris D.E."/>
            <person name="Holden M.T.G."/>
            <person name="Churcher C.M."/>
            <person name="Bentley S.D."/>
            <person name="Mungall K.L."/>
            <person name="Cerdeno-Tarraga A.-M."/>
            <person name="Temple L."/>
            <person name="James K.D."/>
            <person name="Harris B."/>
            <person name="Quail M.A."/>
            <person name="Achtman M."/>
            <person name="Atkin R."/>
            <person name="Baker S."/>
            <person name="Basham D."/>
            <person name="Bason N."/>
            <person name="Cherevach I."/>
            <person name="Chillingworth T."/>
            <person name="Collins M."/>
            <person name="Cronin A."/>
            <person name="Davis P."/>
            <person name="Doggett J."/>
            <person name="Feltwell T."/>
            <person name="Goble A."/>
            <person name="Hamlin N."/>
            <person name="Hauser H."/>
            <person name="Holroyd S."/>
            <person name="Jagels K."/>
            <person name="Leather S."/>
            <person name="Moule S."/>
            <person name="Norberczak H."/>
            <person name="O'Neil S."/>
            <person name="Ormond D."/>
            <person name="Price C."/>
            <person name="Rabbinowitsch E."/>
            <person name="Rutter S."/>
            <person name="Sanders M."/>
            <person name="Saunders D."/>
            <person name="Seeger K."/>
            <person name="Sharp S."/>
            <person name="Simmonds M."/>
            <person name="Skelton J."/>
            <person name="Squares R."/>
            <person name="Squares S."/>
            <person name="Stevens K."/>
            <person name="Unwin L."/>
            <person name="Whitehead S."/>
            <person name="Barrell B.G."/>
            <person name="Maskell D.J."/>
        </authorList>
    </citation>
    <scope>NUCLEOTIDE SEQUENCE [LARGE SCALE GENOMIC DNA]</scope>
    <source>
        <strain>Tohama I / ATCC BAA-589 / NCTC 13251</strain>
    </source>
</reference>
<gene>
    <name evidence="1" type="primary">infC</name>
    <name type="ordered locus">BP1498</name>
</gene>
<accession>Q7VY63</accession>
<proteinExistence type="inferred from homology"/>
<keyword id="KW-0963">Cytoplasm</keyword>
<keyword id="KW-0396">Initiation factor</keyword>
<keyword id="KW-0648">Protein biosynthesis</keyword>
<keyword id="KW-1185">Reference proteome</keyword>
<dbReference type="EMBL" id="BX640415">
    <property type="protein sequence ID" value="CAE41787.1"/>
    <property type="molecule type" value="Genomic_DNA"/>
</dbReference>
<dbReference type="RefSeq" id="NP_880234.1">
    <property type="nucleotide sequence ID" value="NC_002929.2"/>
</dbReference>
<dbReference type="SMR" id="Q7VY63"/>
<dbReference type="STRING" id="257313.BP1498"/>
<dbReference type="PaxDb" id="257313-BP1498"/>
<dbReference type="KEGG" id="bpe:BP1498"/>
<dbReference type="PATRIC" id="fig|257313.5.peg.1609"/>
<dbReference type="eggNOG" id="COG0290">
    <property type="taxonomic scope" value="Bacteria"/>
</dbReference>
<dbReference type="HOGENOM" id="CLU_054919_3_2_4"/>
<dbReference type="Proteomes" id="UP000002676">
    <property type="component" value="Chromosome"/>
</dbReference>
<dbReference type="GO" id="GO:0005829">
    <property type="term" value="C:cytosol"/>
    <property type="evidence" value="ECO:0007669"/>
    <property type="project" value="TreeGrafter"/>
</dbReference>
<dbReference type="GO" id="GO:0016020">
    <property type="term" value="C:membrane"/>
    <property type="evidence" value="ECO:0007669"/>
    <property type="project" value="TreeGrafter"/>
</dbReference>
<dbReference type="GO" id="GO:0043022">
    <property type="term" value="F:ribosome binding"/>
    <property type="evidence" value="ECO:0007669"/>
    <property type="project" value="TreeGrafter"/>
</dbReference>
<dbReference type="GO" id="GO:0003743">
    <property type="term" value="F:translation initiation factor activity"/>
    <property type="evidence" value="ECO:0007669"/>
    <property type="project" value="UniProtKB-UniRule"/>
</dbReference>
<dbReference type="GO" id="GO:0032790">
    <property type="term" value="P:ribosome disassembly"/>
    <property type="evidence" value="ECO:0007669"/>
    <property type="project" value="TreeGrafter"/>
</dbReference>
<dbReference type="FunFam" id="3.30.110.10:FF:000001">
    <property type="entry name" value="Translation initiation factor IF-3"/>
    <property type="match status" value="1"/>
</dbReference>
<dbReference type="Gene3D" id="3.30.110.10">
    <property type="entry name" value="Translation initiation factor 3 (IF-3), C-terminal domain"/>
    <property type="match status" value="1"/>
</dbReference>
<dbReference type="Gene3D" id="3.10.20.80">
    <property type="entry name" value="Translation initiation factor 3 (IF-3), N-terminal domain"/>
    <property type="match status" value="1"/>
</dbReference>
<dbReference type="HAMAP" id="MF_00080">
    <property type="entry name" value="IF_3"/>
    <property type="match status" value="1"/>
</dbReference>
<dbReference type="InterPro" id="IPR036788">
    <property type="entry name" value="T_IF-3_C_sf"/>
</dbReference>
<dbReference type="InterPro" id="IPR036787">
    <property type="entry name" value="T_IF-3_N_sf"/>
</dbReference>
<dbReference type="InterPro" id="IPR019813">
    <property type="entry name" value="Translation_initiation_fac3_CS"/>
</dbReference>
<dbReference type="InterPro" id="IPR001288">
    <property type="entry name" value="Translation_initiation_fac_3"/>
</dbReference>
<dbReference type="InterPro" id="IPR019815">
    <property type="entry name" value="Translation_initiation_fac_3_C"/>
</dbReference>
<dbReference type="InterPro" id="IPR019814">
    <property type="entry name" value="Translation_initiation_fac_3_N"/>
</dbReference>
<dbReference type="NCBIfam" id="TIGR00168">
    <property type="entry name" value="infC"/>
    <property type="match status" value="1"/>
</dbReference>
<dbReference type="PANTHER" id="PTHR10938">
    <property type="entry name" value="TRANSLATION INITIATION FACTOR IF-3"/>
    <property type="match status" value="1"/>
</dbReference>
<dbReference type="PANTHER" id="PTHR10938:SF0">
    <property type="entry name" value="TRANSLATION INITIATION FACTOR IF-3, MITOCHONDRIAL"/>
    <property type="match status" value="1"/>
</dbReference>
<dbReference type="Pfam" id="PF00707">
    <property type="entry name" value="IF3_C"/>
    <property type="match status" value="1"/>
</dbReference>
<dbReference type="Pfam" id="PF05198">
    <property type="entry name" value="IF3_N"/>
    <property type="match status" value="1"/>
</dbReference>
<dbReference type="SUPFAM" id="SSF55200">
    <property type="entry name" value="Translation initiation factor IF3, C-terminal domain"/>
    <property type="match status" value="1"/>
</dbReference>
<dbReference type="SUPFAM" id="SSF54364">
    <property type="entry name" value="Translation initiation factor IF3, N-terminal domain"/>
    <property type="match status" value="1"/>
</dbReference>
<dbReference type="PROSITE" id="PS00938">
    <property type="entry name" value="IF3"/>
    <property type="match status" value="1"/>
</dbReference>
<protein>
    <recommendedName>
        <fullName evidence="1">Translation initiation factor IF-3</fullName>
    </recommendedName>
</protein>
<name>IF3_BORPE</name>
<feature type="chain" id="PRO_0000177490" description="Translation initiation factor IF-3">
    <location>
        <begin position="1"/>
        <end position="164"/>
    </location>
</feature>
<comment type="function">
    <text evidence="1">IF-3 binds to the 30S ribosomal subunit and shifts the equilibrium between 70S ribosomes and their 50S and 30S subunits in favor of the free subunits, thus enhancing the availability of 30S subunits on which protein synthesis initiation begins.</text>
</comment>
<comment type="subunit">
    <text evidence="1">Monomer.</text>
</comment>
<comment type="subcellular location">
    <subcellularLocation>
        <location evidence="1">Cytoplasm</location>
    </subcellularLocation>
</comment>
<comment type="similarity">
    <text evidence="1">Belongs to the IF-3 family.</text>
</comment>
<organism>
    <name type="scientific">Bordetella pertussis (strain Tohama I / ATCC BAA-589 / NCTC 13251)</name>
    <dbReference type="NCBI Taxonomy" id="257313"/>
    <lineage>
        <taxon>Bacteria</taxon>
        <taxon>Pseudomonadati</taxon>
        <taxon>Pseudomonadota</taxon>
        <taxon>Betaproteobacteria</taxon>
        <taxon>Burkholderiales</taxon>
        <taxon>Alcaligenaceae</taxon>
        <taxon>Bordetella</taxon>
    </lineage>
</organism>
<evidence type="ECO:0000255" key="1">
    <source>
        <dbReference type="HAMAP-Rule" id="MF_00080"/>
    </source>
</evidence>
<sequence>MRLIGLDGEQLGIVKIADAFRLSEQSDVDLVEIAPNADPPVCRLMDYGKFKYQEQKRQAEARSKQKVIQVKEVKFRPATDEGDYQVKLRNLRRFLEEGDKAKVTLRFRGREMAHQELGMRVLERVRDDLIELAQVEAMPKLEGRQMVMVLAPRKKAVGKPDAAG</sequence>